<gene>
    <name evidence="1" type="primary">rplN</name>
    <name type="ordered locus">SGO_1975</name>
</gene>
<sequence>MIQTETRLKVADNSGAREILTIKVLGGSGRKFANIGDVIVASVKQATPGGAVKKGDVVKAVIVRTKSGARRKDGSYIKFDENAAVIIREDKTPRGTRIFGPVARELRDGGFMKIVSLAPEVL</sequence>
<proteinExistence type="inferred from homology"/>
<protein>
    <recommendedName>
        <fullName evidence="1">Large ribosomal subunit protein uL14</fullName>
    </recommendedName>
    <alternativeName>
        <fullName evidence="2">50S ribosomal protein L14</fullName>
    </alternativeName>
</protein>
<reference key="1">
    <citation type="journal article" date="2007" name="J. Bacteriol.">
        <title>Genome-wide transcriptional changes in Streptococcus gordonii in response to competence signaling peptide.</title>
        <authorList>
            <person name="Vickerman M.M."/>
            <person name="Iobst S."/>
            <person name="Jesionowski A.M."/>
            <person name="Gill S.R."/>
        </authorList>
    </citation>
    <scope>NUCLEOTIDE SEQUENCE [LARGE SCALE GENOMIC DNA]</scope>
    <source>
        <strain>Challis / ATCC 35105 / BCRC 15272 / CH1 / DL1 / V288</strain>
    </source>
</reference>
<comment type="function">
    <text evidence="1">Binds to 23S rRNA. Forms part of two intersubunit bridges in the 70S ribosome.</text>
</comment>
<comment type="subunit">
    <text evidence="1">Part of the 50S ribosomal subunit. Forms a cluster with proteins L3 and L19. In the 70S ribosome, L14 and L19 interact and together make contacts with the 16S rRNA in bridges B5 and B8.</text>
</comment>
<comment type="similarity">
    <text evidence="1">Belongs to the universal ribosomal protein uL14 family.</text>
</comment>
<dbReference type="EMBL" id="CP000725">
    <property type="protein sequence ID" value="ABV11021.1"/>
    <property type="molecule type" value="Genomic_DNA"/>
</dbReference>
<dbReference type="RefSeq" id="WP_002894494.1">
    <property type="nucleotide sequence ID" value="NC_009785.1"/>
</dbReference>
<dbReference type="SMR" id="A8AZL5"/>
<dbReference type="STRING" id="467705.SGO_1975"/>
<dbReference type="GeneID" id="93920914"/>
<dbReference type="KEGG" id="sgo:SGO_1975"/>
<dbReference type="eggNOG" id="COG0093">
    <property type="taxonomic scope" value="Bacteria"/>
</dbReference>
<dbReference type="HOGENOM" id="CLU_095071_2_1_9"/>
<dbReference type="Proteomes" id="UP000001131">
    <property type="component" value="Chromosome"/>
</dbReference>
<dbReference type="GO" id="GO:0022625">
    <property type="term" value="C:cytosolic large ribosomal subunit"/>
    <property type="evidence" value="ECO:0007669"/>
    <property type="project" value="TreeGrafter"/>
</dbReference>
<dbReference type="GO" id="GO:0070180">
    <property type="term" value="F:large ribosomal subunit rRNA binding"/>
    <property type="evidence" value="ECO:0007669"/>
    <property type="project" value="TreeGrafter"/>
</dbReference>
<dbReference type="GO" id="GO:0003735">
    <property type="term" value="F:structural constituent of ribosome"/>
    <property type="evidence" value="ECO:0007669"/>
    <property type="project" value="InterPro"/>
</dbReference>
<dbReference type="GO" id="GO:0006412">
    <property type="term" value="P:translation"/>
    <property type="evidence" value="ECO:0007669"/>
    <property type="project" value="UniProtKB-UniRule"/>
</dbReference>
<dbReference type="CDD" id="cd00337">
    <property type="entry name" value="Ribosomal_uL14"/>
    <property type="match status" value="1"/>
</dbReference>
<dbReference type="FunFam" id="2.40.150.20:FF:000001">
    <property type="entry name" value="50S ribosomal protein L14"/>
    <property type="match status" value="1"/>
</dbReference>
<dbReference type="Gene3D" id="2.40.150.20">
    <property type="entry name" value="Ribosomal protein L14"/>
    <property type="match status" value="1"/>
</dbReference>
<dbReference type="HAMAP" id="MF_01367">
    <property type="entry name" value="Ribosomal_uL14"/>
    <property type="match status" value="1"/>
</dbReference>
<dbReference type="InterPro" id="IPR000218">
    <property type="entry name" value="Ribosomal_uL14"/>
</dbReference>
<dbReference type="InterPro" id="IPR005745">
    <property type="entry name" value="Ribosomal_uL14_bac-type"/>
</dbReference>
<dbReference type="InterPro" id="IPR019972">
    <property type="entry name" value="Ribosomal_uL14_CS"/>
</dbReference>
<dbReference type="InterPro" id="IPR036853">
    <property type="entry name" value="Ribosomal_uL14_sf"/>
</dbReference>
<dbReference type="NCBIfam" id="TIGR01067">
    <property type="entry name" value="rplN_bact"/>
    <property type="match status" value="1"/>
</dbReference>
<dbReference type="PANTHER" id="PTHR11761">
    <property type="entry name" value="50S/60S RIBOSOMAL PROTEIN L14/L23"/>
    <property type="match status" value="1"/>
</dbReference>
<dbReference type="PANTHER" id="PTHR11761:SF3">
    <property type="entry name" value="LARGE RIBOSOMAL SUBUNIT PROTEIN UL14M"/>
    <property type="match status" value="1"/>
</dbReference>
<dbReference type="Pfam" id="PF00238">
    <property type="entry name" value="Ribosomal_L14"/>
    <property type="match status" value="1"/>
</dbReference>
<dbReference type="SMART" id="SM01374">
    <property type="entry name" value="Ribosomal_L14"/>
    <property type="match status" value="1"/>
</dbReference>
<dbReference type="SUPFAM" id="SSF50193">
    <property type="entry name" value="Ribosomal protein L14"/>
    <property type="match status" value="1"/>
</dbReference>
<dbReference type="PROSITE" id="PS00049">
    <property type="entry name" value="RIBOSOMAL_L14"/>
    <property type="match status" value="1"/>
</dbReference>
<evidence type="ECO:0000255" key="1">
    <source>
        <dbReference type="HAMAP-Rule" id="MF_01367"/>
    </source>
</evidence>
<evidence type="ECO:0000305" key="2"/>
<keyword id="KW-1185">Reference proteome</keyword>
<keyword id="KW-0687">Ribonucleoprotein</keyword>
<keyword id="KW-0689">Ribosomal protein</keyword>
<keyword id="KW-0694">RNA-binding</keyword>
<keyword id="KW-0699">rRNA-binding</keyword>
<name>RL14_STRGC</name>
<accession>A8AZL5</accession>
<feature type="chain" id="PRO_1000087154" description="Large ribosomal subunit protein uL14">
    <location>
        <begin position="1"/>
        <end position="122"/>
    </location>
</feature>
<organism>
    <name type="scientific">Streptococcus gordonii (strain Challis / ATCC 35105 / BCRC 15272 / CH1 / DL1 / V288)</name>
    <dbReference type="NCBI Taxonomy" id="467705"/>
    <lineage>
        <taxon>Bacteria</taxon>
        <taxon>Bacillati</taxon>
        <taxon>Bacillota</taxon>
        <taxon>Bacilli</taxon>
        <taxon>Lactobacillales</taxon>
        <taxon>Streptococcaceae</taxon>
        <taxon>Streptococcus</taxon>
    </lineage>
</organism>